<protein>
    <recommendedName>
        <fullName evidence="1">Chaperone protein TorD</fullName>
    </recommendedName>
</protein>
<feature type="initiator methionine" description="Removed">
    <location>
        <position position="1"/>
    </location>
</feature>
<feature type="chain" id="PRO_0000211642" description="Chaperone protein TorD">
    <location>
        <begin position="2"/>
        <end position="209"/>
    </location>
</feature>
<feature type="helix" evidence="2">
    <location>
        <begin position="7"/>
        <end position="22"/>
    </location>
</feature>
<feature type="helix" evidence="2">
    <location>
        <begin position="27"/>
        <end position="34"/>
    </location>
</feature>
<feature type="helix" evidence="2">
    <location>
        <begin position="36"/>
        <end position="46"/>
    </location>
</feature>
<feature type="turn" evidence="2">
    <location>
        <begin position="49"/>
        <end position="51"/>
    </location>
</feature>
<feature type="helix" evidence="2">
    <location>
        <begin position="52"/>
        <end position="64"/>
    </location>
</feature>
<feature type="helix" evidence="2">
    <location>
        <begin position="68"/>
        <end position="82"/>
    </location>
</feature>
<feature type="helix" evidence="2">
    <location>
        <begin position="94"/>
        <end position="97"/>
    </location>
</feature>
<feature type="helix" evidence="2">
    <location>
        <begin position="108"/>
        <end position="110"/>
    </location>
</feature>
<feature type="helix" evidence="2">
    <location>
        <begin position="111"/>
        <end position="121"/>
    </location>
</feature>
<feature type="helix" evidence="2">
    <location>
        <begin position="132"/>
        <end position="134"/>
    </location>
</feature>
<feature type="helix" evidence="2">
    <location>
        <begin position="136"/>
        <end position="149"/>
    </location>
</feature>
<feature type="helix" evidence="2">
    <location>
        <begin position="152"/>
        <end position="162"/>
    </location>
</feature>
<feature type="turn" evidence="2">
    <location>
        <begin position="163"/>
        <end position="166"/>
    </location>
</feature>
<feature type="helix" evidence="2">
    <location>
        <begin position="167"/>
        <end position="177"/>
    </location>
</feature>
<feature type="helix" evidence="2">
    <location>
        <begin position="182"/>
        <end position="206"/>
    </location>
</feature>
<feature type="helix" evidence="2">
    <location>
        <begin position="207"/>
        <end position="209"/>
    </location>
</feature>
<proteinExistence type="evidence at protein level"/>
<dbReference type="EMBL" id="AJ006085">
    <property type="protein sequence ID" value="CAA06852.1"/>
    <property type="molecule type" value="Genomic_DNA"/>
</dbReference>
<dbReference type="PDB" id="1N1C">
    <property type="method" value="X-ray"/>
    <property type="resolution" value="2.40 A"/>
    <property type="chains" value="A/B=1-209"/>
</dbReference>
<dbReference type="PDBsum" id="1N1C"/>
<dbReference type="SMR" id="O87949"/>
<dbReference type="DrugBank" id="DB04447">
    <property type="generic name" value="1,4-Dithiothreitol"/>
</dbReference>
<dbReference type="EvolutionaryTrace" id="O87949"/>
<dbReference type="GO" id="GO:0005737">
    <property type="term" value="C:cytoplasm"/>
    <property type="evidence" value="ECO:0007669"/>
    <property type="project" value="UniProtKB-SubCell"/>
</dbReference>
<dbReference type="GO" id="GO:0051259">
    <property type="term" value="P:protein complex oligomerization"/>
    <property type="evidence" value="ECO:0007669"/>
    <property type="project" value="InterPro"/>
</dbReference>
<dbReference type="GO" id="GO:0006457">
    <property type="term" value="P:protein folding"/>
    <property type="evidence" value="ECO:0007669"/>
    <property type="project" value="UniProtKB-UniRule"/>
</dbReference>
<dbReference type="Gene3D" id="1.20.120.1820">
    <property type="match status" value="1"/>
</dbReference>
<dbReference type="Gene3D" id="1.20.1280.20">
    <property type="entry name" value="HscB, C-terminal domain"/>
    <property type="match status" value="1"/>
</dbReference>
<dbReference type="HAMAP" id="MF_01150">
    <property type="entry name" value="TorD"/>
    <property type="match status" value="1"/>
</dbReference>
<dbReference type="InterPro" id="IPR023069">
    <property type="entry name" value="Chaperone_TorD"/>
</dbReference>
<dbReference type="InterPro" id="IPR020945">
    <property type="entry name" value="DMSO/NO3_reduct_chaperone"/>
</dbReference>
<dbReference type="InterPro" id="IPR036386">
    <property type="entry name" value="HscB_C_sf"/>
</dbReference>
<dbReference type="InterPro" id="IPR036411">
    <property type="entry name" value="TorD-like_sf"/>
</dbReference>
<dbReference type="InterPro" id="IPR050289">
    <property type="entry name" value="TorD/DmsD_chaperones"/>
</dbReference>
<dbReference type="NCBIfam" id="NF003442">
    <property type="entry name" value="PRK04976.1"/>
    <property type="match status" value="1"/>
</dbReference>
<dbReference type="PANTHER" id="PTHR34227:SF11">
    <property type="entry name" value="CHAPERONE PROTEIN TORD"/>
    <property type="match status" value="1"/>
</dbReference>
<dbReference type="PANTHER" id="PTHR34227">
    <property type="entry name" value="CHAPERONE PROTEIN YCDY"/>
    <property type="match status" value="1"/>
</dbReference>
<dbReference type="Pfam" id="PF02613">
    <property type="entry name" value="Nitrate_red_del"/>
    <property type="match status" value="1"/>
</dbReference>
<dbReference type="SUPFAM" id="SSF89155">
    <property type="entry name" value="TorD-like"/>
    <property type="match status" value="1"/>
</dbReference>
<gene>
    <name evidence="1" type="primary">torD</name>
</gene>
<keyword id="KW-0002">3D-structure</keyword>
<keyword id="KW-0143">Chaperone</keyword>
<keyword id="KW-0963">Cytoplasm</keyword>
<organism>
    <name type="scientific">Shewanella massilia</name>
    <dbReference type="NCBI Taxonomy" id="76854"/>
    <lineage>
        <taxon>Bacteria</taxon>
        <taxon>Pseudomonadati</taxon>
        <taxon>Pseudomonadota</taxon>
        <taxon>Gammaproteobacteria</taxon>
        <taxon>Alteromonadales</taxon>
        <taxon>Shewanellaceae</taxon>
        <taxon>Shewanella</taxon>
    </lineage>
</organism>
<accession>O87949</accession>
<sequence>MSQVDINHARALVYQLLSSLFAREVDEQRLKELTSEAAQQFWEQLSLEANFTQSVDKIRSTLNGIKDDEALLELAADYCGLFLVGTKHSASPYASLYLSGEDEPLLFGEQHQQMSEFLHQSKLQVQSHFPEPADHLAVMLAYMAHLFCHSENSVQLSFLQTCFNSWLAKFINHLTQCNKNGFYSAVATLTLAWVKQDIAQLEPAVAIIS</sequence>
<name>TORD_SHEMA</name>
<evidence type="ECO:0000255" key="1">
    <source>
        <dbReference type="HAMAP-Rule" id="MF_01150"/>
    </source>
</evidence>
<evidence type="ECO:0007829" key="2">
    <source>
        <dbReference type="PDB" id="1N1C"/>
    </source>
</evidence>
<reference key="1">
    <citation type="journal article" date="1998" name="J. Mol. Biol.">
        <title>Molecular analysis of the trimethylamine N-oxide (TMAO) reductase respiratory system from a Shewanella species.</title>
        <authorList>
            <person name="Dos Santos J.P."/>
            <person name="Iobbi-Nivol C."/>
            <person name="Couillault C."/>
            <person name="Giordano G."/>
            <person name="Mejean V."/>
        </authorList>
    </citation>
    <scope>NUCLEOTIDE SEQUENCE [GENOMIC DNA]</scope>
</reference>
<reference key="2">
    <citation type="journal article" date="2002" name="Protein Sci.">
        <title>Characterization and multiple molecular forms of TorD from Shewanella massilia, the putative chaperone of the molybdoenzyme TorA.</title>
        <authorList>
            <person name="Tranier S."/>
            <person name="Mortier-Barriere I."/>
            <person name="Ilbert M."/>
            <person name="Birck C."/>
            <person name="Iobbi-Nivol C."/>
            <person name="Mejean V."/>
            <person name="Samama J.P."/>
        </authorList>
    </citation>
    <scope>CHARACTERIZATION</scope>
</reference>
<reference key="3">
    <citation type="journal article" date="2003" name="Structure">
        <title>A novel protein fold and extreme domain swapping in the dimeric TorD chaperone from Shewanella massilia.</title>
        <authorList>
            <person name="Tranier S."/>
            <person name="Iobbi-Nivol C."/>
            <person name="Birck C."/>
            <person name="Ilbert M."/>
            <person name="Mortier-Barriere I."/>
            <person name="Mejean V."/>
            <person name="Samama J.-P."/>
        </authorList>
    </citation>
    <scope>X-RAY CRYSTALLOGRAPHY (2.4 ANGSTROMS)</scope>
</reference>
<comment type="function">
    <text>Involved in the biogenesis of TorA. Acts on TorA before the insertion of the molybdenum cofactor and, as a result, probably favors a conformation of the apoenzyme that is competent for acquiring the cofactor.</text>
</comment>
<comment type="subcellular location">
    <subcellularLocation>
        <location evidence="1">Cytoplasm</location>
    </subcellularLocation>
</comment>
<comment type="similarity">
    <text evidence="1">Belongs to the TorD/DmsD family. TorD subfamily.</text>
</comment>